<organism>
    <name type="scientific">Arabidopsis thaliana</name>
    <name type="common">Mouse-ear cress</name>
    <dbReference type="NCBI Taxonomy" id="3702"/>
    <lineage>
        <taxon>Eukaryota</taxon>
        <taxon>Viridiplantae</taxon>
        <taxon>Streptophyta</taxon>
        <taxon>Embryophyta</taxon>
        <taxon>Tracheophyta</taxon>
        <taxon>Spermatophyta</taxon>
        <taxon>Magnoliopsida</taxon>
        <taxon>eudicotyledons</taxon>
        <taxon>Gunneridae</taxon>
        <taxon>Pentapetalae</taxon>
        <taxon>rosids</taxon>
        <taxon>malvids</taxon>
        <taxon>Brassicales</taxon>
        <taxon>Brassicaceae</taxon>
        <taxon>Camelineae</taxon>
        <taxon>Arabidopsis</taxon>
    </lineage>
</organism>
<comment type="function">
    <text evidence="1">May be involved in environmental stress response.</text>
</comment>
<sequence length="170" mass="18598">MAEEHRCQTPESNRLCVNNCGFLGSSATMNLCSNCYGDLCLKQQQQSSSIKSTVESSLSVSPPSSSSSEISSPIIPPLLKNPSVKLEVPEKKAVISLPTTEQNQQQRPNRCTTCRKRVGLTGFKCRCGTMFCGVHRYPEIHGCSYDFKSAGREEIAKANPLVKAAKLQKI</sequence>
<gene>
    <name type="primary">SAP6</name>
    <name type="ordered locus">At3g52800</name>
    <name type="ORF">F3C22.200</name>
</gene>
<proteinExistence type="evidence at transcript level"/>
<evidence type="ECO:0000250" key="1"/>
<evidence type="ECO:0000255" key="2">
    <source>
        <dbReference type="PROSITE-ProRule" id="PRU00449"/>
    </source>
</evidence>
<evidence type="ECO:0000255" key="3">
    <source>
        <dbReference type="PROSITE-ProRule" id="PRU00451"/>
    </source>
</evidence>
<evidence type="ECO:0000256" key="4">
    <source>
        <dbReference type="SAM" id="MobiDB-lite"/>
    </source>
</evidence>
<evidence type="ECO:0000305" key="5"/>
<reference key="1">
    <citation type="journal article" date="2000" name="Nature">
        <title>Sequence and analysis of chromosome 3 of the plant Arabidopsis thaliana.</title>
        <authorList>
            <person name="Salanoubat M."/>
            <person name="Lemcke K."/>
            <person name="Rieger M."/>
            <person name="Ansorge W."/>
            <person name="Unseld M."/>
            <person name="Fartmann B."/>
            <person name="Valle G."/>
            <person name="Bloecker H."/>
            <person name="Perez-Alonso M."/>
            <person name="Obermaier B."/>
            <person name="Delseny M."/>
            <person name="Boutry M."/>
            <person name="Grivell L.A."/>
            <person name="Mache R."/>
            <person name="Puigdomenech P."/>
            <person name="De Simone V."/>
            <person name="Choisne N."/>
            <person name="Artiguenave F."/>
            <person name="Robert C."/>
            <person name="Brottier P."/>
            <person name="Wincker P."/>
            <person name="Cattolico L."/>
            <person name="Weissenbach J."/>
            <person name="Saurin W."/>
            <person name="Quetier F."/>
            <person name="Schaefer M."/>
            <person name="Mueller-Auer S."/>
            <person name="Gabel C."/>
            <person name="Fuchs M."/>
            <person name="Benes V."/>
            <person name="Wurmbach E."/>
            <person name="Drzonek H."/>
            <person name="Erfle H."/>
            <person name="Jordan N."/>
            <person name="Bangert S."/>
            <person name="Wiedelmann R."/>
            <person name="Kranz H."/>
            <person name="Voss H."/>
            <person name="Holland R."/>
            <person name="Brandt P."/>
            <person name="Nyakatura G."/>
            <person name="Vezzi A."/>
            <person name="D'Angelo M."/>
            <person name="Pallavicini A."/>
            <person name="Toppo S."/>
            <person name="Simionati B."/>
            <person name="Conrad A."/>
            <person name="Hornischer K."/>
            <person name="Kauer G."/>
            <person name="Loehnert T.-H."/>
            <person name="Nordsiek G."/>
            <person name="Reichelt J."/>
            <person name="Scharfe M."/>
            <person name="Schoen O."/>
            <person name="Bargues M."/>
            <person name="Terol J."/>
            <person name="Climent J."/>
            <person name="Navarro P."/>
            <person name="Collado C."/>
            <person name="Perez-Perez A."/>
            <person name="Ottenwaelder B."/>
            <person name="Duchemin D."/>
            <person name="Cooke R."/>
            <person name="Laudie M."/>
            <person name="Berger-Llauro C."/>
            <person name="Purnelle B."/>
            <person name="Masuy D."/>
            <person name="de Haan M."/>
            <person name="Maarse A.C."/>
            <person name="Alcaraz J.-P."/>
            <person name="Cottet A."/>
            <person name="Casacuberta E."/>
            <person name="Monfort A."/>
            <person name="Argiriou A."/>
            <person name="Flores M."/>
            <person name="Liguori R."/>
            <person name="Vitale D."/>
            <person name="Mannhaupt G."/>
            <person name="Haase D."/>
            <person name="Schoof H."/>
            <person name="Rudd S."/>
            <person name="Zaccaria P."/>
            <person name="Mewes H.-W."/>
            <person name="Mayer K.F.X."/>
            <person name="Kaul S."/>
            <person name="Town C.D."/>
            <person name="Koo H.L."/>
            <person name="Tallon L.J."/>
            <person name="Jenkins J."/>
            <person name="Rooney T."/>
            <person name="Rizzo M."/>
            <person name="Walts A."/>
            <person name="Utterback T."/>
            <person name="Fujii C.Y."/>
            <person name="Shea T.P."/>
            <person name="Creasy T.H."/>
            <person name="Haas B."/>
            <person name="Maiti R."/>
            <person name="Wu D."/>
            <person name="Peterson J."/>
            <person name="Van Aken S."/>
            <person name="Pai G."/>
            <person name="Militscher J."/>
            <person name="Sellers P."/>
            <person name="Gill J.E."/>
            <person name="Feldblyum T.V."/>
            <person name="Preuss D."/>
            <person name="Lin X."/>
            <person name="Nierman W.C."/>
            <person name="Salzberg S.L."/>
            <person name="White O."/>
            <person name="Venter J.C."/>
            <person name="Fraser C.M."/>
            <person name="Kaneko T."/>
            <person name="Nakamura Y."/>
            <person name="Sato S."/>
            <person name="Kato T."/>
            <person name="Asamizu E."/>
            <person name="Sasamoto S."/>
            <person name="Kimura T."/>
            <person name="Idesawa K."/>
            <person name="Kawashima K."/>
            <person name="Kishida Y."/>
            <person name="Kiyokawa C."/>
            <person name="Kohara M."/>
            <person name="Matsumoto M."/>
            <person name="Matsuno A."/>
            <person name="Muraki A."/>
            <person name="Nakayama S."/>
            <person name="Nakazaki N."/>
            <person name="Shinpo S."/>
            <person name="Takeuchi C."/>
            <person name="Wada T."/>
            <person name="Watanabe A."/>
            <person name="Yamada M."/>
            <person name="Yasuda M."/>
            <person name="Tabata S."/>
        </authorList>
    </citation>
    <scope>NUCLEOTIDE SEQUENCE [LARGE SCALE GENOMIC DNA]</scope>
    <source>
        <strain>cv. Columbia</strain>
    </source>
</reference>
<reference key="2">
    <citation type="journal article" date="2017" name="Plant J.">
        <title>Araport11: a complete reannotation of the Arabidopsis thaliana reference genome.</title>
        <authorList>
            <person name="Cheng C.Y."/>
            <person name="Krishnakumar V."/>
            <person name="Chan A.P."/>
            <person name="Thibaud-Nissen F."/>
            <person name="Schobel S."/>
            <person name="Town C.D."/>
        </authorList>
    </citation>
    <scope>GENOME REANNOTATION</scope>
    <source>
        <strain>cv. Columbia</strain>
    </source>
</reference>
<reference key="3">
    <citation type="journal article" date="2003" name="Science">
        <title>Empirical analysis of transcriptional activity in the Arabidopsis genome.</title>
        <authorList>
            <person name="Yamada K."/>
            <person name="Lim J."/>
            <person name="Dale J.M."/>
            <person name="Chen H."/>
            <person name="Shinn P."/>
            <person name="Palm C.J."/>
            <person name="Southwick A.M."/>
            <person name="Wu H.C."/>
            <person name="Kim C.J."/>
            <person name="Nguyen M."/>
            <person name="Pham P.K."/>
            <person name="Cheuk R.F."/>
            <person name="Karlin-Newmann G."/>
            <person name="Liu S.X."/>
            <person name="Lam B."/>
            <person name="Sakano H."/>
            <person name="Wu T."/>
            <person name="Yu G."/>
            <person name="Miranda M."/>
            <person name="Quach H.L."/>
            <person name="Tripp M."/>
            <person name="Chang C.H."/>
            <person name="Lee J.M."/>
            <person name="Toriumi M.J."/>
            <person name="Chan M.M."/>
            <person name="Tang C.C."/>
            <person name="Onodera C.S."/>
            <person name="Deng J.M."/>
            <person name="Akiyama K."/>
            <person name="Ansari Y."/>
            <person name="Arakawa T."/>
            <person name="Banh J."/>
            <person name="Banno F."/>
            <person name="Bowser L."/>
            <person name="Brooks S.Y."/>
            <person name="Carninci P."/>
            <person name="Chao Q."/>
            <person name="Choy N."/>
            <person name="Enju A."/>
            <person name="Goldsmith A.D."/>
            <person name="Gurjal M."/>
            <person name="Hansen N.F."/>
            <person name="Hayashizaki Y."/>
            <person name="Johnson-Hopson C."/>
            <person name="Hsuan V.W."/>
            <person name="Iida K."/>
            <person name="Karnes M."/>
            <person name="Khan S."/>
            <person name="Koesema E."/>
            <person name="Ishida J."/>
            <person name="Jiang P.X."/>
            <person name="Jones T."/>
            <person name="Kawai J."/>
            <person name="Kamiya A."/>
            <person name="Meyers C."/>
            <person name="Nakajima M."/>
            <person name="Narusaka M."/>
            <person name="Seki M."/>
            <person name="Sakurai T."/>
            <person name="Satou M."/>
            <person name="Tamse R."/>
            <person name="Vaysberg M."/>
            <person name="Wallender E.K."/>
            <person name="Wong C."/>
            <person name="Yamamura Y."/>
            <person name="Yuan S."/>
            <person name="Shinozaki K."/>
            <person name="Davis R.W."/>
            <person name="Theologis A."/>
            <person name="Ecker J.R."/>
        </authorList>
    </citation>
    <scope>NUCLEOTIDE SEQUENCE [LARGE SCALE MRNA]</scope>
    <source>
        <strain>cv. Columbia</strain>
    </source>
</reference>
<reference key="4">
    <citation type="journal article" date="2006" name="Mol. Genet. Genomics">
        <title>Genome-wide analysis of the stress associated protein (SAP) gene family containing A20/AN1 zinc-finger(s) in rice and their phylogenetic relationship with Arabidopsis.</title>
        <authorList>
            <person name="Vij S."/>
            <person name="Tyagi A.K."/>
        </authorList>
    </citation>
    <scope>GENE FAMILY</scope>
</reference>
<protein>
    <recommendedName>
        <fullName>Zinc finger A20 and AN1 domain-containing stress-associated protein 6</fullName>
        <shortName>AtSAP6</shortName>
    </recommendedName>
</protein>
<accession>Q94B40</accession>
<accession>Q9LXI5</accession>
<dbReference type="EMBL" id="AL353912">
    <property type="protein sequence ID" value="CAB89241.1"/>
    <property type="molecule type" value="Genomic_DNA"/>
</dbReference>
<dbReference type="EMBL" id="CP002686">
    <property type="protein sequence ID" value="AEE78995.1"/>
    <property type="molecule type" value="Genomic_DNA"/>
</dbReference>
<dbReference type="EMBL" id="CP002686">
    <property type="protein sequence ID" value="ANM63890.1"/>
    <property type="molecule type" value="Genomic_DNA"/>
</dbReference>
<dbReference type="EMBL" id="AY042871">
    <property type="protein sequence ID" value="AAK68811.1"/>
    <property type="molecule type" value="mRNA"/>
</dbReference>
<dbReference type="EMBL" id="AY072524">
    <property type="protein sequence ID" value="AAL66939.1"/>
    <property type="molecule type" value="mRNA"/>
</dbReference>
<dbReference type="PIR" id="T49033">
    <property type="entry name" value="T49033"/>
</dbReference>
<dbReference type="RefSeq" id="NP_001325951.1">
    <property type="nucleotide sequence ID" value="NM_001339589.1"/>
</dbReference>
<dbReference type="RefSeq" id="NP_190848.1">
    <property type="nucleotide sequence ID" value="NM_115140.3"/>
</dbReference>
<dbReference type="SMR" id="Q94B40"/>
<dbReference type="FunCoup" id="Q94B40">
    <property type="interactions" value="2066"/>
</dbReference>
<dbReference type="STRING" id="3702.Q94B40"/>
<dbReference type="iPTMnet" id="Q94B40"/>
<dbReference type="PaxDb" id="3702-AT3G52800.1"/>
<dbReference type="ProteomicsDB" id="226667"/>
<dbReference type="EnsemblPlants" id="AT3G52800.1">
    <property type="protein sequence ID" value="AT3G52800.1"/>
    <property type="gene ID" value="AT3G52800"/>
</dbReference>
<dbReference type="EnsemblPlants" id="AT3G52800.2">
    <property type="protein sequence ID" value="AT3G52800.2"/>
    <property type="gene ID" value="AT3G52800"/>
</dbReference>
<dbReference type="GeneID" id="824446"/>
<dbReference type="Gramene" id="AT3G52800.1">
    <property type="protein sequence ID" value="AT3G52800.1"/>
    <property type="gene ID" value="AT3G52800"/>
</dbReference>
<dbReference type="Gramene" id="AT3G52800.2">
    <property type="protein sequence ID" value="AT3G52800.2"/>
    <property type="gene ID" value="AT3G52800"/>
</dbReference>
<dbReference type="KEGG" id="ath:AT3G52800"/>
<dbReference type="Araport" id="AT3G52800"/>
<dbReference type="TAIR" id="AT3G52800"/>
<dbReference type="eggNOG" id="KOG3173">
    <property type="taxonomic scope" value="Eukaryota"/>
</dbReference>
<dbReference type="HOGENOM" id="CLU_057016_5_3_1"/>
<dbReference type="InParanoid" id="Q94B40"/>
<dbReference type="OMA" id="CQTPESN"/>
<dbReference type="PhylomeDB" id="Q94B40"/>
<dbReference type="PRO" id="PR:Q94B40"/>
<dbReference type="Proteomes" id="UP000006548">
    <property type="component" value="Chromosome 3"/>
</dbReference>
<dbReference type="ExpressionAtlas" id="Q94B40">
    <property type="expression patterns" value="baseline and differential"/>
</dbReference>
<dbReference type="GO" id="GO:0003677">
    <property type="term" value="F:DNA binding"/>
    <property type="evidence" value="ECO:0007669"/>
    <property type="project" value="InterPro"/>
</dbReference>
<dbReference type="GO" id="GO:0008270">
    <property type="term" value="F:zinc ion binding"/>
    <property type="evidence" value="ECO:0007669"/>
    <property type="project" value="UniProtKB-KW"/>
</dbReference>
<dbReference type="GO" id="GO:0071456">
    <property type="term" value="P:cellular response to hypoxia"/>
    <property type="evidence" value="ECO:0007007"/>
    <property type="project" value="TAIR"/>
</dbReference>
<dbReference type="FunFam" id="4.10.1110.10:FF:000001">
    <property type="entry name" value="Zinc finger AN1-type containing 6"/>
    <property type="match status" value="1"/>
</dbReference>
<dbReference type="Gene3D" id="1.20.5.4770">
    <property type="match status" value="1"/>
</dbReference>
<dbReference type="Gene3D" id="4.10.1110.10">
    <property type="entry name" value="AN1-like Zinc finger"/>
    <property type="match status" value="1"/>
</dbReference>
<dbReference type="InterPro" id="IPR035896">
    <property type="entry name" value="AN1-like_Znf"/>
</dbReference>
<dbReference type="InterPro" id="IPR050652">
    <property type="entry name" value="AN1_A20_ZnFinger"/>
</dbReference>
<dbReference type="InterPro" id="IPR002653">
    <property type="entry name" value="Znf_A20"/>
</dbReference>
<dbReference type="InterPro" id="IPR000058">
    <property type="entry name" value="Znf_AN1"/>
</dbReference>
<dbReference type="PANTHER" id="PTHR10634">
    <property type="entry name" value="AN1-TYPE ZINC FINGER PROTEIN"/>
    <property type="match status" value="1"/>
</dbReference>
<dbReference type="PANTHER" id="PTHR10634:SF114">
    <property type="entry name" value="ZINC FINGER A20 AND AN1 DOMAIN-CONTAINING STRESS-ASSOCIATED PROTEIN 6"/>
    <property type="match status" value="1"/>
</dbReference>
<dbReference type="Pfam" id="PF01754">
    <property type="entry name" value="zf-A20"/>
    <property type="match status" value="1"/>
</dbReference>
<dbReference type="Pfam" id="PF01428">
    <property type="entry name" value="zf-AN1"/>
    <property type="match status" value="1"/>
</dbReference>
<dbReference type="SMART" id="SM00259">
    <property type="entry name" value="ZnF_A20"/>
    <property type="match status" value="1"/>
</dbReference>
<dbReference type="SMART" id="SM00154">
    <property type="entry name" value="ZnF_AN1"/>
    <property type="match status" value="1"/>
</dbReference>
<dbReference type="SUPFAM" id="SSF118310">
    <property type="entry name" value="AN1-like Zinc finger"/>
    <property type="match status" value="1"/>
</dbReference>
<dbReference type="SUPFAM" id="SSF57716">
    <property type="entry name" value="Glucocorticoid receptor-like (DNA-binding domain)"/>
    <property type="match status" value="1"/>
</dbReference>
<dbReference type="PROSITE" id="PS51036">
    <property type="entry name" value="ZF_A20"/>
    <property type="match status" value="1"/>
</dbReference>
<dbReference type="PROSITE" id="PS51039">
    <property type="entry name" value="ZF_AN1"/>
    <property type="match status" value="1"/>
</dbReference>
<feature type="chain" id="PRO_0000269858" description="Zinc finger A20 and AN1 domain-containing stress-associated protein 6">
    <location>
        <begin position="1"/>
        <end position="170"/>
    </location>
</feature>
<feature type="zinc finger region" description="A20-type" evidence="3">
    <location>
        <begin position="10"/>
        <end position="44"/>
    </location>
</feature>
<feature type="zinc finger region" description="AN1-type" evidence="2">
    <location>
        <begin position="105"/>
        <end position="151"/>
    </location>
</feature>
<feature type="region of interest" description="Disordered" evidence="4">
    <location>
        <begin position="53"/>
        <end position="76"/>
    </location>
</feature>
<feature type="binding site" evidence="3">
    <location>
        <position position="16"/>
    </location>
    <ligand>
        <name>Zn(2+)</name>
        <dbReference type="ChEBI" id="CHEBI:29105"/>
        <label>1</label>
    </ligand>
</feature>
<feature type="binding site" evidence="3">
    <location>
        <position position="20"/>
    </location>
    <ligand>
        <name>Zn(2+)</name>
        <dbReference type="ChEBI" id="CHEBI:29105"/>
        <label>1</label>
    </ligand>
</feature>
<feature type="binding site" evidence="3">
    <location>
        <position position="32"/>
    </location>
    <ligand>
        <name>Zn(2+)</name>
        <dbReference type="ChEBI" id="CHEBI:29105"/>
        <label>1</label>
    </ligand>
</feature>
<feature type="binding site" evidence="3">
    <location>
        <position position="35"/>
    </location>
    <ligand>
        <name>Zn(2+)</name>
        <dbReference type="ChEBI" id="CHEBI:29105"/>
        <label>1</label>
    </ligand>
</feature>
<feature type="binding site" evidence="2">
    <location>
        <position position="111"/>
    </location>
    <ligand>
        <name>Zn(2+)</name>
        <dbReference type="ChEBI" id="CHEBI:29105"/>
        <label>2</label>
    </ligand>
</feature>
<feature type="binding site" evidence="2">
    <location>
        <position position="114"/>
    </location>
    <ligand>
        <name>Zn(2+)</name>
        <dbReference type="ChEBI" id="CHEBI:29105"/>
        <label>2</label>
    </ligand>
</feature>
<feature type="binding site" evidence="2">
    <location>
        <position position="125"/>
    </location>
    <ligand>
        <name>Zn(2+)</name>
        <dbReference type="ChEBI" id="CHEBI:29105"/>
        <label>3</label>
    </ligand>
</feature>
<feature type="binding site" evidence="2">
    <location>
        <position position="127"/>
    </location>
    <ligand>
        <name>Zn(2+)</name>
        <dbReference type="ChEBI" id="CHEBI:29105"/>
        <label>3</label>
    </ligand>
</feature>
<feature type="binding site" evidence="2">
    <location>
        <position position="132"/>
    </location>
    <ligand>
        <name>Zn(2+)</name>
        <dbReference type="ChEBI" id="CHEBI:29105"/>
        <label>2</label>
    </ligand>
</feature>
<feature type="binding site" evidence="2">
    <location>
        <position position="135"/>
    </location>
    <ligand>
        <name>Zn(2+)</name>
        <dbReference type="ChEBI" id="CHEBI:29105"/>
        <label>2</label>
    </ligand>
</feature>
<feature type="binding site" evidence="2">
    <location>
        <position position="141"/>
    </location>
    <ligand>
        <name>Zn(2+)</name>
        <dbReference type="ChEBI" id="CHEBI:29105"/>
        <label>3</label>
    </ligand>
</feature>
<feature type="binding site" evidence="2">
    <location>
        <position position="143"/>
    </location>
    <ligand>
        <name>Zn(2+)</name>
        <dbReference type="ChEBI" id="CHEBI:29105"/>
        <label>3</label>
    </ligand>
</feature>
<feature type="sequence conflict" description="In Ref. 3; AAK68811/AAL66939." evidence="5" ref="3">
    <location>
        <position position="26"/>
    </location>
</feature>
<name>SAP6_ARATH</name>
<keyword id="KW-0479">Metal-binding</keyword>
<keyword id="KW-1185">Reference proteome</keyword>
<keyword id="KW-0862">Zinc</keyword>
<keyword id="KW-0863">Zinc-finger</keyword>